<protein>
    <recommendedName>
        <fullName evidence="1">sn-glycerol-3-phosphate import ATP-binding protein UgpC</fullName>
        <ecNumber evidence="1">7.6.2.10</ecNumber>
    </recommendedName>
</protein>
<evidence type="ECO:0000255" key="1">
    <source>
        <dbReference type="HAMAP-Rule" id="MF_01727"/>
    </source>
</evidence>
<comment type="function">
    <text evidence="1">Part of the ABC transporter complex UgpBAEC involved in sn-glycerol-3-phosphate (G3P) import. Responsible for energy coupling to the transport system.</text>
</comment>
<comment type="catalytic activity">
    <reaction evidence="1">
        <text>sn-glycerol 3-phosphate(out) + ATP + H2O = sn-glycerol 3-phosphate(in) + ADP + phosphate + H(+)</text>
        <dbReference type="Rhea" id="RHEA:21668"/>
        <dbReference type="ChEBI" id="CHEBI:15377"/>
        <dbReference type="ChEBI" id="CHEBI:15378"/>
        <dbReference type="ChEBI" id="CHEBI:30616"/>
        <dbReference type="ChEBI" id="CHEBI:43474"/>
        <dbReference type="ChEBI" id="CHEBI:57597"/>
        <dbReference type="ChEBI" id="CHEBI:456216"/>
        <dbReference type="EC" id="7.6.2.10"/>
    </reaction>
</comment>
<comment type="subunit">
    <text evidence="1">The complex is composed of two ATP-binding proteins (UgpC), two transmembrane proteins (UgpA and UgpE) and a solute-binding protein (UgpB).</text>
</comment>
<comment type="subcellular location">
    <subcellularLocation>
        <location evidence="1">Cell inner membrane</location>
        <topology evidence="1">Peripheral membrane protein</topology>
    </subcellularLocation>
</comment>
<comment type="similarity">
    <text evidence="1">Belongs to the ABC transporter superfamily. sn-glycerol-3-phosphate importer (TC 3.A.1.1.3) family.</text>
</comment>
<gene>
    <name evidence="1" type="primary">ugpC</name>
    <name type="ordered locus">BMA2741</name>
</gene>
<proteinExistence type="inferred from homology"/>
<keyword id="KW-0067">ATP-binding</keyword>
<keyword id="KW-0997">Cell inner membrane</keyword>
<keyword id="KW-1003">Cell membrane</keyword>
<keyword id="KW-0472">Membrane</keyword>
<keyword id="KW-0547">Nucleotide-binding</keyword>
<keyword id="KW-1185">Reference proteome</keyword>
<keyword id="KW-0762">Sugar transport</keyword>
<keyword id="KW-1278">Translocase</keyword>
<keyword id="KW-0813">Transport</keyword>
<feature type="chain" id="PRO_0000289741" description="sn-glycerol-3-phosphate import ATP-binding protein UgpC">
    <location>
        <begin position="1"/>
        <end position="360"/>
    </location>
</feature>
<feature type="domain" description="ABC transporter" evidence="1">
    <location>
        <begin position="4"/>
        <end position="235"/>
    </location>
</feature>
<feature type="binding site" evidence="1">
    <location>
        <begin position="37"/>
        <end position="44"/>
    </location>
    <ligand>
        <name>ATP</name>
        <dbReference type="ChEBI" id="CHEBI:30616"/>
    </ligand>
</feature>
<reference key="1">
    <citation type="journal article" date="2004" name="Proc. Natl. Acad. Sci. U.S.A.">
        <title>Structural flexibility in the Burkholderia mallei genome.</title>
        <authorList>
            <person name="Nierman W.C."/>
            <person name="DeShazer D."/>
            <person name="Kim H.S."/>
            <person name="Tettelin H."/>
            <person name="Nelson K.E."/>
            <person name="Feldblyum T.V."/>
            <person name="Ulrich R.L."/>
            <person name="Ronning C.M."/>
            <person name="Brinkac L.M."/>
            <person name="Daugherty S.C."/>
            <person name="Davidsen T.D."/>
            <person name="DeBoy R.T."/>
            <person name="Dimitrov G."/>
            <person name="Dodson R.J."/>
            <person name="Durkin A.S."/>
            <person name="Gwinn M.L."/>
            <person name="Haft D.H."/>
            <person name="Khouri H.M."/>
            <person name="Kolonay J.F."/>
            <person name="Madupu R."/>
            <person name="Mohammoud Y."/>
            <person name="Nelson W.C."/>
            <person name="Radune D."/>
            <person name="Romero C.M."/>
            <person name="Sarria S."/>
            <person name="Selengut J."/>
            <person name="Shamblin C."/>
            <person name="Sullivan S.A."/>
            <person name="White O."/>
            <person name="Yu Y."/>
            <person name="Zafar N."/>
            <person name="Zhou L."/>
            <person name="Fraser C.M."/>
        </authorList>
    </citation>
    <scope>NUCLEOTIDE SEQUENCE [LARGE SCALE GENOMIC DNA]</scope>
    <source>
        <strain>ATCC 23344</strain>
    </source>
</reference>
<name>UGPC_BURMA</name>
<organism>
    <name type="scientific">Burkholderia mallei (strain ATCC 23344)</name>
    <dbReference type="NCBI Taxonomy" id="243160"/>
    <lineage>
        <taxon>Bacteria</taxon>
        <taxon>Pseudomonadati</taxon>
        <taxon>Pseudomonadota</taxon>
        <taxon>Betaproteobacteria</taxon>
        <taxon>Burkholderiales</taxon>
        <taxon>Burkholderiaceae</taxon>
        <taxon>Burkholderia</taxon>
        <taxon>pseudomallei group</taxon>
    </lineage>
</organism>
<dbReference type="EC" id="7.6.2.10" evidence="1"/>
<dbReference type="EMBL" id="CP000010">
    <property type="protein sequence ID" value="AAU48306.1"/>
    <property type="molecule type" value="Genomic_DNA"/>
</dbReference>
<dbReference type="RefSeq" id="WP_004196746.1">
    <property type="nucleotide sequence ID" value="NC_006348.1"/>
</dbReference>
<dbReference type="RefSeq" id="YP_104260.1">
    <property type="nucleotide sequence ID" value="NC_006348.1"/>
</dbReference>
<dbReference type="SMR" id="Q62GB4"/>
<dbReference type="KEGG" id="bma:BMA2741"/>
<dbReference type="PATRIC" id="fig|243160.12.peg.2810"/>
<dbReference type="eggNOG" id="COG3842">
    <property type="taxonomic scope" value="Bacteria"/>
</dbReference>
<dbReference type="HOGENOM" id="CLU_000604_1_1_4"/>
<dbReference type="Proteomes" id="UP000006693">
    <property type="component" value="Chromosome 1"/>
</dbReference>
<dbReference type="GO" id="GO:0055052">
    <property type="term" value="C:ATP-binding cassette (ABC) transporter complex, substrate-binding subunit-containing"/>
    <property type="evidence" value="ECO:0007669"/>
    <property type="project" value="TreeGrafter"/>
</dbReference>
<dbReference type="GO" id="GO:0015430">
    <property type="term" value="F:ABC-type glycerol-3-phosphate transporter activity"/>
    <property type="evidence" value="ECO:0007669"/>
    <property type="project" value="UniProtKB-EC"/>
</dbReference>
<dbReference type="GO" id="GO:0005524">
    <property type="term" value="F:ATP binding"/>
    <property type="evidence" value="ECO:0007669"/>
    <property type="project" value="UniProtKB-KW"/>
</dbReference>
<dbReference type="GO" id="GO:0016887">
    <property type="term" value="F:ATP hydrolysis activity"/>
    <property type="evidence" value="ECO:0007669"/>
    <property type="project" value="InterPro"/>
</dbReference>
<dbReference type="GO" id="GO:0008643">
    <property type="term" value="P:carbohydrate transport"/>
    <property type="evidence" value="ECO:0007669"/>
    <property type="project" value="InterPro"/>
</dbReference>
<dbReference type="GO" id="GO:0001407">
    <property type="term" value="P:glycerophosphodiester transmembrane transport"/>
    <property type="evidence" value="ECO:0007669"/>
    <property type="project" value="TreeGrafter"/>
</dbReference>
<dbReference type="CDD" id="cd03301">
    <property type="entry name" value="ABC_MalK_N"/>
    <property type="match status" value="1"/>
</dbReference>
<dbReference type="FunFam" id="3.40.50.300:FF:000042">
    <property type="entry name" value="Maltose/maltodextrin ABC transporter, ATP-binding protein"/>
    <property type="match status" value="1"/>
</dbReference>
<dbReference type="Gene3D" id="2.40.50.100">
    <property type="match status" value="1"/>
</dbReference>
<dbReference type="Gene3D" id="2.40.50.140">
    <property type="entry name" value="Nucleic acid-binding proteins"/>
    <property type="match status" value="1"/>
</dbReference>
<dbReference type="Gene3D" id="3.40.50.300">
    <property type="entry name" value="P-loop containing nucleotide triphosphate hydrolases"/>
    <property type="match status" value="1"/>
</dbReference>
<dbReference type="InterPro" id="IPR003593">
    <property type="entry name" value="AAA+_ATPase"/>
</dbReference>
<dbReference type="InterPro" id="IPR003439">
    <property type="entry name" value="ABC_transporter-like_ATP-bd"/>
</dbReference>
<dbReference type="InterPro" id="IPR017871">
    <property type="entry name" value="ABC_transporter-like_CS"/>
</dbReference>
<dbReference type="InterPro" id="IPR015855">
    <property type="entry name" value="ABC_transpr_MalK-like"/>
</dbReference>
<dbReference type="InterPro" id="IPR047641">
    <property type="entry name" value="ABC_transpr_MalK/UgpC-like"/>
</dbReference>
<dbReference type="InterPro" id="IPR008995">
    <property type="entry name" value="Mo/tungstate-bd_C_term_dom"/>
</dbReference>
<dbReference type="InterPro" id="IPR012340">
    <property type="entry name" value="NA-bd_OB-fold"/>
</dbReference>
<dbReference type="InterPro" id="IPR040582">
    <property type="entry name" value="OB_MalK-like"/>
</dbReference>
<dbReference type="InterPro" id="IPR027417">
    <property type="entry name" value="P-loop_NTPase"/>
</dbReference>
<dbReference type="NCBIfam" id="NF008653">
    <property type="entry name" value="PRK11650.1"/>
    <property type="match status" value="1"/>
</dbReference>
<dbReference type="PANTHER" id="PTHR43875">
    <property type="entry name" value="MALTODEXTRIN IMPORT ATP-BINDING PROTEIN MSMX"/>
    <property type="match status" value="1"/>
</dbReference>
<dbReference type="PANTHER" id="PTHR43875:SF12">
    <property type="entry name" value="SN-GLYCEROL-3-PHOSPHATE IMPORT ATP-BINDING PROTEIN UGPC"/>
    <property type="match status" value="1"/>
</dbReference>
<dbReference type="Pfam" id="PF00005">
    <property type="entry name" value="ABC_tran"/>
    <property type="match status" value="1"/>
</dbReference>
<dbReference type="Pfam" id="PF17912">
    <property type="entry name" value="OB_MalK"/>
    <property type="match status" value="1"/>
</dbReference>
<dbReference type="SMART" id="SM00382">
    <property type="entry name" value="AAA"/>
    <property type="match status" value="1"/>
</dbReference>
<dbReference type="SUPFAM" id="SSF50331">
    <property type="entry name" value="MOP-like"/>
    <property type="match status" value="1"/>
</dbReference>
<dbReference type="SUPFAM" id="SSF52540">
    <property type="entry name" value="P-loop containing nucleoside triphosphate hydrolases"/>
    <property type="match status" value="1"/>
</dbReference>
<dbReference type="PROSITE" id="PS00211">
    <property type="entry name" value="ABC_TRANSPORTER_1"/>
    <property type="match status" value="1"/>
</dbReference>
<dbReference type="PROSITE" id="PS50893">
    <property type="entry name" value="ABC_TRANSPORTER_2"/>
    <property type="match status" value="1"/>
</dbReference>
<dbReference type="PROSITE" id="PS51315">
    <property type="entry name" value="UGPC"/>
    <property type="match status" value="1"/>
</dbReference>
<accession>Q62GB4</accession>
<sequence length="360" mass="38630">MAALSLKGVKKSYGGAQYVLHGIDVDIADGEFVVLVGPSGCGKSTLLRMIAGLETVTEGEIAIGGRIVNALEPKDRDIAMVFQNYALYPHMTVAQNMGYGLKIRGVERALIDARVQAAAQILELGPLLARRPRELSGGQRQRVAMGRAIVREPSVFLFDEPLSNLDAKLRVQMRLEIQRLHARLATTSVYVTHDQIEAMTLAQRVIVMNRGDAEQIGAPVDVYEKPATTFVASFIGSPAMNLLHGRLSEDGAAFDVADGPRLPVAGAAGAGRGIAPGREWILGVRPEHMTPQPGEAFATLAVDSCELLGADNLAHGRWGAHDVAVRLPHAMRPTRGETLPVALPARHLHFFDPATGKRAG</sequence>